<dbReference type="EC" id="5.4.99.12" evidence="1"/>
<dbReference type="EMBL" id="AE004437">
    <property type="protein sequence ID" value="AAG20174.1"/>
    <property type="molecule type" value="Genomic_DNA"/>
</dbReference>
<dbReference type="PIR" id="B84351">
    <property type="entry name" value="B84351"/>
</dbReference>
<dbReference type="RefSeq" id="WP_010903475.1">
    <property type="nucleotide sequence ID" value="NC_002607.1"/>
</dbReference>
<dbReference type="SMR" id="Q9HNP6"/>
<dbReference type="FunCoup" id="Q9HNP6">
    <property type="interactions" value="168"/>
</dbReference>
<dbReference type="STRING" id="64091.VNG_2003G"/>
<dbReference type="PaxDb" id="64091-VNG_2003G"/>
<dbReference type="GeneID" id="89350191"/>
<dbReference type="KEGG" id="hal:VNG_2003G"/>
<dbReference type="PATRIC" id="fig|64091.14.peg.1531"/>
<dbReference type="HOGENOM" id="CLU_014673_4_2_2"/>
<dbReference type="InParanoid" id="Q9HNP6"/>
<dbReference type="OrthoDB" id="25720at2157"/>
<dbReference type="PhylomeDB" id="Q9HNP6"/>
<dbReference type="Proteomes" id="UP000000554">
    <property type="component" value="Chromosome"/>
</dbReference>
<dbReference type="GO" id="GO:0009982">
    <property type="term" value="F:pseudouridine synthase activity"/>
    <property type="evidence" value="ECO:0000318"/>
    <property type="project" value="GO_Central"/>
</dbReference>
<dbReference type="GO" id="GO:0003723">
    <property type="term" value="F:RNA binding"/>
    <property type="evidence" value="ECO:0007669"/>
    <property type="project" value="InterPro"/>
</dbReference>
<dbReference type="GO" id="GO:0160147">
    <property type="term" value="F:tRNA pseudouridine(38-40) synthase activity"/>
    <property type="evidence" value="ECO:0007669"/>
    <property type="project" value="UniProtKB-EC"/>
</dbReference>
<dbReference type="GO" id="GO:0031119">
    <property type="term" value="P:tRNA pseudouridine synthesis"/>
    <property type="evidence" value="ECO:0000318"/>
    <property type="project" value="GO_Central"/>
</dbReference>
<dbReference type="CDD" id="cd00497">
    <property type="entry name" value="PseudoU_synth_TruA_like"/>
    <property type="match status" value="1"/>
</dbReference>
<dbReference type="Gene3D" id="3.30.70.660">
    <property type="entry name" value="Pseudouridine synthase I, catalytic domain, C-terminal subdomain"/>
    <property type="match status" value="1"/>
</dbReference>
<dbReference type="Gene3D" id="3.30.70.580">
    <property type="entry name" value="Pseudouridine synthase I, catalytic domain, N-terminal subdomain"/>
    <property type="match status" value="1"/>
</dbReference>
<dbReference type="HAMAP" id="MF_00171">
    <property type="entry name" value="TruA"/>
    <property type="match status" value="1"/>
</dbReference>
<dbReference type="InterPro" id="IPR020103">
    <property type="entry name" value="PsdUridine_synth_cat_dom_sf"/>
</dbReference>
<dbReference type="InterPro" id="IPR001406">
    <property type="entry name" value="PsdUridine_synth_TruA"/>
</dbReference>
<dbReference type="InterPro" id="IPR020097">
    <property type="entry name" value="PsdUridine_synth_TruA_a/b_dom"/>
</dbReference>
<dbReference type="InterPro" id="IPR020095">
    <property type="entry name" value="PsdUridine_synth_TruA_C"/>
</dbReference>
<dbReference type="InterPro" id="IPR020094">
    <property type="entry name" value="TruA/RsuA/RluB/E/F_N"/>
</dbReference>
<dbReference type="NCBIfam" id="NF000622">
    <property type="entry name" value="PRK00021.3-3"/>
    <property type="match status" value="1"/>
</dbReference>
<dbReference type="PANTHER" id="PTHR11142">
    <property type="entry name" value="PSEUDOURIDYLATE SYNTHASE"/>
    <property type="match status" value="1"/>
</dbReference>
<dbReference type="PANTHER" id="PTHR11142:SF0">
    <property type="entry name" value="TRNA PSEUDOURIDINE SYNTHASE-LIKE 1"/>
    <property type="match status" value="1"/>
</dbReference>
<dbReference type="Pfam" id="PF01416">
    <property type="entry name" value="PseudoU_synth_1"/>
    <property type="match status" value="1"/>
</dbReference>
<dbReference type="PIRSF" id="PIRSF001430">
    <property type="entry name" value="tRNA_psdUrid_synth"/>
    <property type="match status" value="1"/>
</dbReference>
<dbReference type="SUPFAM" id="SSF55120">
    <property type="entry name" value="Pseudouridine synthase"/>
    <property type="match status" value="1"/>
</dbReference>
<organism>
    <name type="scientific">Halobacterium salinarum (strain ATCC 700922 / JCM 11081 / NRC-1)</name>
    <name type="common">Halobacterium halobium</name>
    <dbReference type="NCBI Taxonomy" id="64091"/>
    <lineage>
        <taxon>Archaea</taxon>
        <taxon>Methanobacteriati</taxon>
        <taxon>Methanobacteriota</taxon>
        <taxon>Stenosarchaea group</taxon>
        <taxon>Halobacteria</taxon>
        <taxon>Halobacteriales</taxon>
        <taxon>Halobacteriaceae</taxon>
        <taxon>Halobacterium</taxon>
        <taxon>Halobacterium salinarum NRC-34001</taxon>
    </lineage>
</organism>
<keyword id="KW-0413">Isomerase</keyword>
<keyword id="KW-1185">Reference proteome</keyword>
<keyword id="KW-0819">tRNA processing</keyword>
<accession>Q9HNP6</accession>
<protein>
    <recommendedName>
        <fullName evidence="1">tRNA pseudouridine synthase A</fullName>
        <ecNumber evidence="1">5.4.99.12</ecNumber>
    </recommendedName>
    <alternativeName>
        <fullName evidence="1">tRNA pseudouridine(38-40) synthase</fullName>
    </alternativeName>
    <alternativeName>
        <fullName evidence="1">tRNA pseudouridylate synthase I</fullName>
    </alternativeName>
    <alternativeName>
        <fullName evidence="1">tRNA-uridine isomerase I</fullName>
    </alternativeName>
</protein>
<evidence type="ECO:0000255" key="1">
    <source>
        <dbReference type="HAMAP-Rule" id="MF_00171"/>
    </source>
</evidence>
<feature type="chain" id="PRO_0000057501" description="tRNA pseudouridine synthase A">
    <location>
        <begin position="1"/>
        <end position="266"/>
    </location>
</feature>
<feature type="active site" description="Nucleophile" evidence="1">
    <location>
        <position position="56"/>
    </location>
</feature>
<feature type="binding site" evidence="1">
    <location>
        <position position="110"/>
    </location>
    <ligand>
        <name>substrate</name>
    </ligand>
</feature>
<sequence length="266" mass="28863">MPRRAFRVAYDGRPYHGFQRQPDVSTVAGELFGALRRLDVFDGAKPPGYAAAGRTDAGVSARAQTVAFDAPAWLTPDAFTGALPDPIQVWAHADAPPEFHATHDAVARTYVYYWYAPDSRATDDRAAGALDRLTGTHDFHNLTPNTTNTVRELDATLDRDGAFRVITVRAGGFCRELVRRVVSLVQLVTETGDTDRIDTVLGDEPVAGPDGVPPADPHPLVLHAVAYDGLSFTVDEDAAERARTTFRAARADHHERARVAGHLASI</sequence>
<gene>
    <name evidence="1" type="primary">truA</name>
    <name type="ordered locus">VNG_2003G</name>
</gene>
<reference key="1">
    <citation type="journal article" date="2000" name="Proc. Natl. Acad. Sci. U.S.A.">
        <title>Genome sequence of Halobacterium species NRC-1.</title>
        <authorList>
            <person name="Ng W.V."/>
            <person name="Kennedy S.P."/>
            <person name="Mahairas G.G."/>
            <person name="Berquist B."/>
            <person name="Pan M."/>
            <person name="Shukla H.D."/>
            <person name="Lasky S.R."/>
            <person name="Baliga N.S."/>
            <person name="Thorsson V."/>
            <person name="Sbrogna J."/>
            <person name="Swartzell S."/>
            <person name="Weir D."/>
            <person name="Hall J."/>
            <person name="Dahl T.A."/>
            <person name="Welti R."/>
            <person name="Goo Y.A."/>
            <person name="Leithauser B."/>
            <person name="Keller K."/>
            <person name="Cruz R."/>
            <person name="Danson M.J."/>
            <person name="Hough D.W."/>
            <person name="Maddocks D.G."/>
            <person name="Jablonski P.E."/>
            <person name="Krebs M.P."/>
            <person name="Angevine C.M."/>
            <person name="Dale H."/>
            <person name="Isenbarger T.A."/>
            <person name="Peck R.F."/>
            <person name="Pohlschroder M."/>
            <person name="Spudich J.L."/>
            <person name="Jung K.-H."/>
            <person name="Alam M."/>
            <person name="Freitas T."/>
            <person name="Hou S."/>
            <person name="Daniels C.J."/>
            <person name="Dennis P.P."/>
            <person name="Omer A.D."/>
            <person name="Ebhardt H."/>
            <person name="Lowe T.M."/>
            <person name="Liang P."/>
            <person name="Riley M."/>
            <person name="Hood L."/>
            <person name="DasSarma S."/>
        </authorList>
    </citation>
    <scope>NUCLEOTIDE SEQUENCE [LARGE SCALE GENOMIC DNA]</scope>
    <source>
        <strain>ATCC 700922 / JCM 11081 / NRC-1</strain>
    </source>
</reference>
<comment type="function">
    <text evidence="1">Formation of pseudouridine at positions 38, 39 and 40 in the anticodon stem and loop of transfer RNAs.</text>
</comment>
<comment type="catalytic activity">
    <reaction evidence="1">
        <text>uridine(38/39/40) in tRNA = pseudouridine(38/39/40) in tRNA</text>
        <dbReference type="Rhea" id="RHEA:22376"/>
        <dbReference type="Rhea" id="RHEA-COMP:10085"/>
        <dbReference type="Rhea" id="RHEA-COMP:10087"/>
        <dbReference type="ChEBI" id="CHEBI:65314"/>
        <dbReference type="ChEBI" id="CHEBI:65315"/>
        <dbReference type="EC" id="5.4.99.12"/>
    </reaction>
</comment>
<comment type="similarity">
    <text evidence="1">Belongs to the tRNA pseudouridine synthase TruA family.</text>
</comment>
<proteinExistence type="inferred from homology"/>
<name>TRUA_HALSA</name>